<comment type="function">
    <text evidence="3 4 6">DNA deaminase (cytidine deaminase) which acts as an inhibitor of retrovirus replication and retrotransposon mobility via deaminase-dependent and -independent mechanisms. Exhibits antiviral activity against vif-deficient HIV-1. After the penetration of retroviral nucleocapsids into target cells of infection and the initiation of reverse transcription, it can induce the conversion of cytosine to uracil in the minus-sense single-strand viral DNA, leading to G-to-A hypermutations in the subsequent plus-strand viral DNA. The resultant detrimental levels of mutations in the proviral genome, along with a deamination-independent mechanism that works prior to the proviral integration, together exert efficient antiretroviral effects in infected target cells. Selectively targets single-stranded DNA and does not deaminate double-stranded DNA or single- or double-stranded RNA.</text>
</comment>
<comment type="catalytic activity">
    <reaction>
        <text>a 2'-deoxycytidine in single-stranded DNA + H2O + H(+) = a 2'-deoxyuridine in single-stranded DNA + NH4(+)</text>
        <dbReference type="Rhea" id="RHEA:50948"/>
        <dbReference type="Rhea" id="RHEA-COMP:12846"/>
        <dbReference type="Rhea" id="RHEA-COMP:12847"/>
        <dbReference type="ChEBI" id="CHEBI:15377"/>
        <dbReference type="ChEBI" id="CHEBI:15378"/>
        <dbReference type="ChEBI" id="CHEBI:28938"/>
        <dbReference type="ChEBI" id="CHEBI:85452"/>
        <dbReference type="ChEBI" id="CHEBI:133902"/>
        <dbReference type="EC" id="3.5.4.38"/>
    </reaction>
</comment>
<comment type="cofactor">
    <cofactor evidence="1">
        <name>Zn(2+)</name>
        <dbReference type="ChEBI" id="CHEBI:29105"/>
    </cofactor>
</comment>
<comment type="activity regulation">
    <text evidence="6">Antiviral activity is neutralized by the simian immunodeficiency virus rhesus (SIV-mac) virion infectivity factor (VIF).</text>
</comment>
<comment type="subunit">
    <text evidence="1">Homodimer.</text>
</comment>
<comment type="subcellular location">
    <subcellularLocation>
        <location evidence="4 5 6">Cytoplasm</location>
    </subcellularLocation>
</comment>
<comment type="miscellaneous">
    <text evidence="3">APOBEC3H from old world monkeys has retained its antiviral activity, while it is lost in other primates.</text>
</comment>
<comment type="similarity">
    <text evidence="8">Belongs to the cytidine and deoxycytidylate deaminase family.</text>
</comment>
<name>ABC3H_MACMU</name>
<feature type="chain" id="PRO_0000291664" description="DNA dC-&gt;dU-editing enzyme APOBEC-3H">
    <location>
        <begin position="1"/>
        <end position="210"/>
    </location>
</feature>
<feature type="domain" description="CMP/dCMP-type deaminase" evidence="2">
    <location>
        <begin position="4"/>
        <end position="126"/>
    </location>
</feature>
<feature type="region of interest" description="Necessary and sufficient for localization to the cytoplasm">
    <location>
        <begin position="182"/>
        <end position="210"/>
    </location>
</feature>
<feature type="active site" description="Proton donor" evidence="2">
    <location>
        <position position="56"/>
    </location>
</feature>
<feature type="binding site" evidence="2">
    <location>
        <position position="54"/>
    </location>
    <ligand>
        <name>Zn(2+)</name>
        <dbReference type="ChEBI" id="CHEBI:29105"/>
        <note>catalytic</note>
    </ligand>
</feature>
<feature type="binding site" evidence="2">
    <location>
        <position position="85"/>
    </location>
    <ligand>
        <name>Zn(2+)</name>
        <dbReference type="ChEBI" id="CHEBI:29105"/>
        <note>catalytic</note>
    </ligand>
</feature>
<feature type="binding site" evidence="2">
    <location>
        <position position="88"/>
    </location>
    <ligand>
        <name>Zn(2+)</name>
        <dbReference type="ChEBI" id="CHEBI:29105"/>
        <note>catalytic</note>
    </ligand>
</feature>
<proteinExistence type="evidence at protein level"/>
<evidence type="ECO:0000250" key="1">
    <source>
        <dbReference type="UniProtKB" id="Q6NTF7"/>
    </source>
</evidence>
<evidence type="ECO:0000255" key="2">
    <source>
        <dbReference type="PROSITE-ProRule" id="PRU01083"/>
    </source>
</evidence>
<evidence type="ECO:0000269" key="3">
    <source>
    </source>
</evidence>
<evidence type="ECO:0000269" key="4">
    <source>
    </source>
</evidence>
<evidence type="ECO:0000269" key="5">
    <source>
    </source>
</evidence>
<evidence type="ECO:0000269" key="6">
    <source>
    </source>
</evidence>
<evidence type="ECO:0000303" key="7">
    <source>
    </source>
</evidence>
<evidence type="ECO:0000305" key="8"/>
<keyword id="KW-0051">Antiviral defense</keyword>
<keyword id="KW-0963">Cytoplasm</keyword>
<keyword id="KW-0378">Hydrolase</keyword>
<keyword id="KW-0391">Immunity</keyword>
<keyword id="KW-0399">Innate immunity</keyword>
<keyword id="KW-0479">Metal-binding</keyword>
<keyword id="KW-1185">Reference proteome</keyword>
<keyword id="KW-0862">Zinc</keyword>
<dbReference type="EC" id="3.5.4.38" evidence="1"/>
<dbReference type="EMBL" id="DQ507277">
    <property type="protein sequence ID" value="ABF72849.1"/>
    <property type="molecule type" value="mRNA"/>
</dbReference>
<dbReference type="RefSeq" id="NP_001035831.1">
    <property type="nucleotide sequence ID" value="NM_001042372.1"/>
</dbReference>
<dbReference type="SMR" id="Q19Q52"/>
<dbReference type="FunCoup" id="Q19Q52">
    <property type="interactions" value="27"/>
</dbReference>
<dbReference type="STRING" id="9544.ENSMMUP00000053576"/>
<dbReference type="PaxDb" id="9544-ENSMMUP00000001363"/>
<dbReference type="eggNOG" id="KOG4075">
    <property type="taxonomic scope" value="Eukaryota"/>
</dbReference>
<dbReference type="InParanoid" id="Q19Q52"/>
<dbReference type="Proteomes" id="UP000006718">
    <property type="component" value="Unassembled WGS sequence"/>
</dbReference>
<dbReference type="GO" id="GO:0005737">
    <property type="term" value="C:cytoplasm"/>
    <property type="evidence" value="ECO:0000314"/>
    <property type="project" value="UniProtKB"/>
</dbReference>
<dbReference type="GO" id="GO:0005634">
    <property type="term" value="C:nucleus"/>
    <property type="evidence" value="ECO:0000318"/>
    <property type="project" value="GO_Central"/>
</dbReference>
<dbReference type="GO" id="GO:0000932">
    <property type="term" value="C:P-body"/>
    <property type="evidence" value="ECO:0000250"/>
    <property type="project" value="UniProtKB"/>
</dbReference>
<dbReference type="GO" id="GO:0004126">
    <property type="term" value="F:cytidine deaminase activity"/>
    <property type="evidence" value="ECO:0000314"/>
    <property type="project" value="UniProtKB"/>
</dbReference>
<dbReference type="GO" id="GO:0003723">
    <property type="term" value="F:RNA binding"/>
    <property type="evidence" value="ECO:0000318"/>
    <property type="project" value="GO_Central"/>
</dbReference>
<dbReference type="GO" id="GO:0008270">
    <property type="term" value="F:zinc ion binding"/>
    <property type="evidence" value="ECO:0007669"/>
    <property type="project" value="InterPro"/>
</dbReference>
<dbReference type="GO" id="GO:0016554">
    <property type="term" value="P:cytidine to uridine editing"/>
    <property type="evidence" value="ECO:0000318"/>
    <property type="project" value="GO_Central"/>
</dbReference>
<dbReference type="GO" id="GO:0051607">
    <property type="term" value="P:defense response to virus"/>
    <property type="evidence" value="ECO:0000314"/>
    <property type="project" value="UniProtKB"/>
</dbReference>
<dbReference type="GO" id="GO:0070383">
    <property type="term" value="P:DNA cytosine deamination"/>
    <property type="evidence" value="ECO:0000314"/>
    <property type="project" value="UniProtKB"/>
</dbReference>
<dbReference type="GO" id="GO:0045087">
    <property type="term" value="P:innate immune response"/>
    <property type="evidence" value="ECO:0007669"/>
    <property type="project" value="UniProtKB-KW"/>
</dbReference>
<dbReference type="GO" id="GO:0045869">
    <property type="term" value="P:negative regulation of single stranded viral RNA replication via double stranded DNA intermediate"/>
    <property type="evidence" value="ECO:0000314"/>
    <property type="project" value="UniProtKB"/>
</dbReference>
<dbReference type="CDD" id="cd01283">
    <property type="entry name" value="cytidine_deaminase"/>
    <property type="match status" value="1"/>
</dbReference>
<dbReference type="FunFam" id="3.40.140.10:FF:000047">
    <property type="entry name" value="Apolipoprotein B editing enzyme catalytic polypeptide-like 3H"/>
    <property type="match status" value="1"/>
</dbReference>
<dbReference type="Gene3D" id="3.40.140.10">
    <property type="entry name" value="Cytidine Deaminase, domain 2"/>
    <property type="match status" value="1"/>
</dbReference>
<dbReference type="InterPro" id="IPR016192">
    <property type="entry name" value="APOBEC/CMP_deaminase_Zn-bd"/>
</dbReference>
<dbReference type="InterPro" id="IPR041512">
    <property type="entry name" value="APOBEC3H"/>
</dbReference>
<dbReference type="InterPro" id="IPR050610">
    <property type="entry name" value="APOBEC_Cyt_Deaminase"/>
</dbReference>
<dbReference type="InterPro" id="IPR002125">
    <property type="entry name" value="CMP_dCMP_dom"/>
</dbReference>
<dbReference type="InterPro" id="IPR016193">
    <property type="entry name" value="Cytidine_deaminase-like"/>
</dbReference>
<dbReference type="PANTHER" id="PTHR13857:SF43">
    <property type="entry name" value="DNA DC-DU-EDITING ENZYME APOBEC-3H"/>
    <property type="match status" value="1"/>
</dbReference>
<dbReference type="PANTHER" id="PTHR13857">
    <property type="entry name" value="MRNA EDITING ENZYME"/>
    <property type="match status" value="1"/>
</dbReference>
<dbReference type="Pfam" id="PF18771">
    <property type="entry name" value="APOBEC3"/>
    <property type="match status" value="1"/>
</dbReference>
<dbReference type="SUPFAM" id="SSF53927">
    <property type="entry name" value="Cytidine deaminase-like"/>
    <property type="match status" value="1"/>
</dbReference>
<dbReference type="PROSITE" id="PS00903">
    <property type="entry name" value="CYT_DCMP_DEAMINASES_1"/>
    <property type="match status" value="1"/>
</dbReference>
<dbReference type="PROSITE" id="PS51747">
    <property type="entry name" value="CYT_DCMP_DEAMINASES_2"/>
    <property type="match status" value="1"/>
</dbReference>
<protein>
    <recommendedName>
        <fullName>DNA dC-&gt;dU-editing enzyme APOBEC-3H</fullName>
        <ecNumber evidence="1">3.5.4.38</ecNumber>
    </recommendedName>
    <alternativeName>
        <fullName>Apolipoprotein B mRNA-editing enzyme catalytic polypeptide-like 3H</fullName>
    </alternativeName>
</protein>
<accession>Q19Q52</accession>
<organism>
    <name type="scientific">Macaca mulatta</name>
    <name type="common">Rhesus macaque</name>
    <dbReference type="NCBI Taxonomy" id="9544"/>
    <lineage>
        <taxon>Eukaryota</taxon>
        <taxon>Metazoa</taxon>
        <taxon>Chordata</taxon>
        <taxon>Craniata</taxon>
        <taxon>Vertebrata</taxon>
        <taxon>Euteleostomi</taxon>
        <taxon>Mammalia</taxon>
        <taxon>Eutheria</taxon>
        <taxon>Euarchontoglires</taxon>
        <taxon>Primates</taxon>
        <taxon>Haplorrhini</taxon>
        <taxon>Catarrhini</taxon>
        <taxon>Cercopithecidae</taxon>
        <taxon>Cercopithecinae</taxon>
        <taxon>Macaca</taxon>
    </lineage>
</organism>
<gene>
    <name evidence="7" type="primary">APOBEC3H</name>
</gene>
<sequence length="210" mass="24327">MALLTAKTFSLQFNNKRRVNKPYYPRKALLCYQLTPQNGSTPTRGHLKNKKKDHAEIRFINKIKSMGLDETQCYQVTCYLTWSPCPSCAGELVDFIKAHRHLNLRIFASRLYYHWRPNYQEGLLLLCGSQVPVEVMGLPEFTDCWENFVDHKEPPSFNPSEKLEELDKNSQAIKRRLERIKSRSVDVLENGLRSLQLGPVTPSSSIRNSR</sequence>
<reference key="1">
    <citation type="journal article" date="2006" name="J. Virol.">
        <title>Adaptive evolution and antiviral activity of the conserved mammalian cytidine deaminase APOBEC3H.</title>
        <authorList>
            <person name="OhAinle M."/>
            <person name="Kerns J.A."/>
            <person name="Malik H.S."/>
            <person name="Emerman M."/>
        </authorList>
    </citation>
    <scope>NUCLEOTIDE SEQUENCE [MRNA]</scope>
    <scope>FUNCTION</scope>
    <scope>TISSUE SPECIFICITY</scope>
    <source>
        <tissue>Spleen</tissue>
    </source>
</reference>
<reference key="2">
    <citation type="journal article" date="2008" name="Cell Host Microbe">
        <title>Antiretroelement activity of APOBEC3H was lost twice in recent human evolution.</title>
        <authorList>
            <person name="OhAinle M."/>
            <person name="Kerns J.A."/>
            <person name="Li M.M."/>
            <person name="Malik H.S."/>
            <person name="Emerman M."/>
        </authorList>
    </citation>
    <scope>FUNCTION</scope>
    <scope>SUBCELLULAR LOCATION</scope>
</reference>
<reference key="3">
    <citation type="journal article" date="2011" name="J. Virol.">
        <title>Polymorphism in human APOBEC3H affects a phenotype dominant for subcellular localization and antiviral activity.</title>
        <authorList>
            <person name="Li M.M."/>
            <person name="Emerman M."/>
        </authorList>
    </citation>
    <scope>SUBCELLULAR LOCATION</scope>
</reference>
<reference key="4">
    <citation type="journal article" date="2011" name="J. Virol.">
        <title>Human and rhesus APOBEC3D, APOBEC3F, APOBEC3G, and APOBEC3H demonstrate a conserved capacity to restrict Vif-deficient HIV-1.</title>
        <authorList>
            <person name="Hultquist J.F."/>
            <person name="Lengyel J.A."/>
            <person name="Refsland E.W."/>
            <person name="LaRue R.S."/>
            <person name="Lackey L."/>
            <person name="Brown W.L."/>
            <person name="Harris R.S."/>
        </authorList>
    </citation>
    <scope>FUNCTION IN HIV-1 RESTRICTION</scope>
    <scope>SUBCELLULAR LOCATION</scope>
    <scope>ACTIVITY REGULATION</scope>
</reference>